<protein>
    <recommendedName>
        <fullName evidence="1">GTPase Obg</fullName>
        <ecNumber evidence="1">3.6.5.-</ecNumber>
    </recommendedName>
    <alternativeName>
        <fullName evidence="1">GTP-binding protein Obg</fullName>
    </alternativeName>
</protein>
<gene>
    <name evidence="1" type="primary">obg</name>
    <name type="ordered locus">Ctha_0684</name>
</gene>
<name>OBG_CHLT3</name>
<accession>B3QVU6</accession>
<keyword id="KW-0963">Cytoplasm</keyword>
<keyword id="KW-0342">GTP-binding</keyword>
<keyword id="KW-0378">Hydrolase</keyword>
<keyword id="KW-0460">Magnesium</keyword>
<keyword id="KW-0479">Metal-binding</keyword>
<keyword id="KW-0547">Nucleotide-binding</keyword>
<keyword id="KW-1185">Reference proteome</keyword>
<comment type="function">
    <text evidence="1">An essential GTPase which binds GTP, GDP and possibly (p)ppGpp with moderate affinity, with high nucleotide exchange rates and a fairly low GTP hydrolysis rate. Plays a role in control of the cell cycle, stress response, ribosome biogenesis and in those bacteria that undergo differentiation, in morphogenesis control.</text>
</comment>
<comment type="cofactor">
    <cofactor evidence="1">
        <name>Mg(2+)</name>
        <dbReference type="ChEBI" id="CHEBI:18420"/>
    </cofactor>
</comment>
<comment type="subunit">
    <text evidence="1">Monomer.</text>
</comment>
<comment type="subcellular location">
    <subcellularLocation>
        <location evidence="1">Cytoplasm</location>
    </subcellularLocation>
</comment>
<comment type="similarity">
    <text evidence="1">Belongs to the TRAFAC class OBG-HflX-like GTPase superfamily. OBG GTPase family.</text>
</comment>
<evidence type="ECO:0000255" key="1">
    <source>
        <dbReference type="HAMAP-Rule" id="MF_01454"/>
    </source>
</evidence>
<evidence type="ECO:0000255" key="2">
    <source>
        <dbReference type="PROSITE-ProRule" id="PRU01231"/>
    </source>
</evidence>
<evidence type="ECO:0000256" key="3">
    <source>
        <dbReference type="SAM" id="MobiDB-lite"/>
    </source>
</evidence>
<organism>
    <name type="scientific">Chloroherpeton thalassium (strain ATCC 35110 / GB-78)</name>
    <dbReference type="NCBI Taxonomy" id="517418"/>
    <lineage>
        <taxon>Bacteria</taxon>
        <taxon>Pseudomonadati</taxon>
        <taxon>Chlorobiota</taxon>
        <taxon>Chlorobiia</taxon>
        <taxon>Chlorobiales</taxon>
        <taxon>Chloroherpetonaceae</taxon>
        <taxon>Chloroherpeton</taxon>
    </lineage>
</organism>
<proteinExistence type="inferred from homology"/>
<reference key="1">
    <citation type="submission" date="2008-06" db="EMBL/GenBank/DDBJ databases">
        <title>Complete sequence of Chloroherpeton thalassium ATCC 35110.</title>
        <authorList>
            <consortium name="US DOE Joint Genome Institute"/>
            <person name="Lucas S."/>
            <person name="Copeland A."/>
            <person name="Lapidus A."/>
            <person name="Glavina del Rio T."/>
            <person name="Dalin E."/>
            <person name="Tice H."/>
            <person name="Bruce D."/>
            <person name="Goodwin L."/>
            <person name="Pitluck S."/>
            <person name="Schmutz J."/>
            <person name="Larimer F."/>
            <person name="Land M."/>
            <person name="Hauser L."/>
            <person name="Kyrpides N."/>
            <person name="Mikhailova N."/>
            <person name="Liu Z."/>
            <person name="Li T."/>
            <person name="Zhao F."/>
            <person name="Overmann J."/>
            <person name="Bryant D.A."/>
            <person name="Richardson P."/>
        </authorList>
    </citation>
    <scope>NUCLEOTIDE SEQUENCE [LARGE SCALE GENOMIC DNA]</scope>
    <source>
        <strain>ATCC 35110 / GB-78</strain>
    </source>
</reference>
<sequence>MFIDSAKIYVKAGDGGKGCVSFRHEKFVPKGGPDGGDGGTGGSIFVKADANLATLLDFRYQRHYKAERGEHGQGSRKTGRSAKDVIIKVPVGTIVKDSETGEPLADLVYAGQEVLIAKGGHGGKGNQHFATPTNRAPRYSEPAGVGEERNIDLELKLLADIGLVGFPNAGKSTLISTISAARPKIANYPFTTLEPNLGIVRYAEYQSFVVADIPGIIEGASEGKGLGLKFLKHIERTKVLAILIPADTEDVQAEYDTLIEELRKFDESLCLKPRIVVLSKMDLVLEDASFEVPAFEGEKVVQISSVTGTGLQELKDVLWRIIQESNQQEESIT</sequence>
<dbReference type="EC" id="3.6.5.-" evidence="1"/>
<dbReference type="EMBL" id="CP001100">
    <property type="protein sequence ID" value="ACF13153.1"/>
    <property type="molecule type" value="Genomic_DNA"/>
</dbReference>
<dbReference type="RefSeq" id="WP_012499237.1">
    <property type="nucleotide sequence ID" value="NC_011026.1"/>
</dbReference>
<dbReference type="SMR" id="B3QVU6"/>
<dbReference type="STRING" id="517418.Ctha_0684"/>
<dbReference type="KEGG" id="cts:Ctha_0684"/>
<dbReference type="eggNOG" id="COG0536">
    <property type="taxonomic scope" value="Bacteria"/>
</dbReference>
<dbReference type="HOGENOM" id="CLU_011747_2_0_10"/>
<dbReference type="OrthoDB" id="9807318at2"/>
<dbReference type="Proteomes" id="UP000001208">
    <property type="component" value="Chromosome"/>
</dbReference>
<dbReference type="GO" id="GO:0005737">
    <property type="term" value="C:cytoplasm"/>
    <property type="evidence" value="ECO:0007669"/>
    <property type="project" value="UniProtKB-SubCell"/>
</dbReference>
<dbReference type="GO" id="GO:0005525">
    <property type="term" value="F:GTP binding"/>
    <property type="evidence" value="ECO:0007669"/>
    <property type="project" value="UniProtKB-UniRule"/>
</dbReference>
<dbReference type="GO" id="GO:0003924">
    <property type="term" value="F:GTPase activity"/>
    <property type="evidence" value="ECO:0007669"/>
    <property type="project" value="UniProtKB-UniRule"/>
</dbReference>
<dbReference type="GO" id="GO:0000287">
    <property type="term" value="F:magnesium ion binding"/>
    <property type="evidence" value="ECO:0007669"/>
    <property type="project" value="InterPro"/>
</dbReference>
<dbReference type="GO" id="GO:0042254">
    <property type="term" value="P:ribosome biogenesis"/>
    <property type="evidence" value="ECO:0007669"/>
    <property type="project" value="UniProtKB-UniRule"/>
</dbReference>
<dbReference type="CDD" id="cd01898">
    <property type="entry name" value="Obg"/>
    <property type="match status" value="1"/>
</dbReference>
<dbReference type="FunFam" id="2.70.210.12:FF:000001">
    <property type="entry name" value="GTPase Obg"/>
    <property type="match status" value="1"/>
</dbReference>
<dbReference type="Gene3D" id="2.70.210.12">
    <property type="entry name" value="GTP1/OBG domain"/>
    <property type="match status" value="1"/>
</dbReference>
<dbReference type="Gene3D" id="3.40.50.300">
    <property type="entry name" value="P-loop containing nucleotide triphosphate hydrolases"/>
    <property type="match status" value="1"/>
</dbReference>
<dbReference type="HAMAP" id="MF_01454">
    <property type="entry name" value="GTPase_Obg"/>
    <property type="match status" value="1"/>
</dbReference>
<dbReference type="InterPro" id="IPR031167">
    <property type="entry name" value="G_OBG"/>
</dbReference>
<dbReference type="InterPro" id="IPR006073">
    <property type="entry name" value="GTP-bd"/>
</dbReference>
<dbReference type="InterPro" id="IPR014100">
    <property type="entry name" value="GTP-bd_Obg/CgtA"/>
</dbReference>
<dbReference type="InterPro" id="IPR006074">
    <property type="entry name" value="GTP1-OBG_CS"/>
</dbReference>
<dbReference type="InterPro" id="IPR006169">
    <property type="entry name" value="GTP1_OBG_dom"/>
</dbReference>
<dbReference type="InterPro" id="IPR036726">
    <property type="entry name" value="GTP1_OBG_dom_sf"/>
</dbReference>
<dbReference type="InterPro" id="IPR045086">
    <property type="entry name" value="OBG_GTPase"/>
</dbReference>
<dbReference type="InterPro" id="IPR027417">
    <property type="entry name" value="P-loop_NTPase"/>
</dbReference>
<dbReference type="InterPro" id="IPR005225">
    <property type="entry name" value="Small_GTP-bd"/>
</dbReference>
<dbReference type="NCBIfam" id="TIGR02729">
    <property type="entry name" value="Obg_CgtA"/>
    <property type="match status" value="1"/>
</dbReference>
<dbReference type="NCBIfam" id="NF008955">
    <property type="entry name" value="PRK12297.1"/>
    <property type="match status" value="1"/>
</dbReference>
<dbReference type="NCBIfam" id="NF008956">
    <property type="entry name" value="PRK12299.1"/>
    <property type="match status" value="1"/>
</dbReference>
<dbReference type="NCBIfam" id="TIGR00231">
    <property type="entry name" value="small_GTP"/>
    <property type="match status" value="1"/>
</dbReference>
<dbReference type="PANTHER" id="PTHR11702">
    <property type="entry name" value="DEVELOPMENTALLY REGULATED GTP-BINDING PROTEIN-RELATED"/>
    <property type="match status" value="1"/>
</dbReference>
<dbReference type="PANTHER" id="PTHR11702:SF31">
    <property type="entry name" value="MITOCHONDRIAL RIBOSOME-ASSOCIATED GTPASE 2"/>
    <property type="match status" value="1"/>
</dbReference>
<dbReference type="Pfam" id="PF01018">
    <property type="entry name" value="GTP1_OBG"/>
    <property type="match status" value="1"/>
</dbReference>
<dbReference type="Pfam" id="PF01926">
    <property type="entry name" value="MMR_HSR1"/>
    <property type="match status" value="1"/>
</dbReference>
<dbReference type="PIRSF" id="PIRSF002401">
    <property type="entry name" value="GTP_bd_Obg/CgtA"/>
    <property type="match status" value="1"/>
</dbReference>
<dbReference type="PRINTS" id="PR00326">
    <property type="entry name" value="GTP1OBG"/>
</dbReference>
<dbReference type="SUPFAM" id="SSF82051">
    <property type="entry name" value="Obg GTP-binding protein N-terminal domain"/>
    <property type="match status" value="1"/>
</dbReference>
<dbReference type="SUPFAM" id="SSF52540">
    <property type="entry name" value="P-loop containing nucleoside triphosphate hydrolases"/>
    <property type="match status" value="1"/>
</dbReference>
<dbReference type="PROSITE" id="PS51710">
    <property type="entry name" value="G_OBG"/>
    <property type="match status" value="1"/>
</dbReference>
<dbReference type="PROSITE" id="PS00905">
    <property type="entry name" value="GTP1_OBG"/>
    <property type="match status" value="1"/>
</dbReference>
<dbReference type="PROSITE" id="PS51883">
    <property type="entry name" value="OBG"/>
    <property type="match status" value="1"/>
</dbReference>
<feature type="chain" id="PRO_0000385831" description="GTPase Obg">
    <location>
        <begin position="1"/>
        <end position="333"/>
    </location>
</feature>
<feature type="domain" description="Obg" evidence="2">
    <location>
        <begin position="1"/>
        <end position="158"/>
    </location>
</feature>
<feature type="domain" description="OBG-type G" evidence="1">
    <location>
        <begin position="159"/>
        <end position="323"/>
    </location>
</feature>
<feature type="region of interest" description="Disordered" evidence="3">
    <location>
        <begin position="121"/>
        <end position="143"/>
    </location>
</feature>
<feature type="binding site" evidence="1">
    <location>
        <begin position="165"/>
        <end position="172"/>
    </location>
    <ligand>
        <name>GTP</name>
        <dbReference type="ChEBI" id="CHEBI:37565"/>
    </ligand>
</feature>
<feature type="binding site" evidence="1">
    <location>
        <position position="172"/>
    </location>
    <ligand>
        <name>Mg(2+)</name>
        <dbReference type="ChEBI" id="CHEBI:18420"/>
    </ligand>
</feature>
<feature type="binding site" evidence="1">
    <location>
        <begin position="190"/>
        <end position="194"/>
    </location>
    <ligand>
        <name>GTP</name>
        <dbReference type="ChEBI" id="CHEBI:37565"/>
    </ligand>
</feature>
<feature type="binding site" evidence="1">
    <location>
        <position position="192"/>
    </location>
    <ligand>
        <name>Mg(2+)</name>
        <dbReference type="ChEBI" id="CHEBI:18420"/>
    </ligand>
</feature>
<feature type="binding site" evidence="1">
    <location>
        <begin position="212"/>
        <end position="215"/>
    </location>
    <ligand>
        <name>GTP</name>
        <dbReference type="ChEBI" id="CHEBI:37565"/>
    </ligand>
</feature>
<feature type="binding site" evidence="1">
    <location>
        <begin position="279"/>
        <end position="282"/>
    </location>
    <ligand>
        <name>GTP</name>
        <dbReference type="ChEBI" id="CHEBI:37565"/>
    </ligand>
</feature>
<feature type="binding site" evidence="1">
    <location>
        <begin position="304"/>
        <end position="306"/>
    </location>
    <ligand>
        <name>GTP</name>
        <dbReference type="ChEBI" id="CHEBI:37565"/>
    </ligand>
</feature>